<comment type="function">
    <text evidence="1">Chlamydia replicate within a host intracellular vacuole, termed an inclusion. IncA is probably involved in the homotypic fusion of inclusions.</text>
</comment>
<comment type="subunit">
    <text evidence="1">Forms homooligomers.</text>
</comment>
<comment type="subcellular location">
    <subcellularLocation>
        <location evidence="1">Secreted</location>
    </subcellularLocation>
    <subcellularLocation>
        <location evidence="4 6">Host vacuole</location>
        <location evidence="4 6">Host pathogen-containing vacuole</location>
        <location evidence="4 6">Host pathogen-containing vacuole membrane</location>
        <topology evidence="2">Multi-pass membrane protein</topology>
    </subcellularLocation>
    <text evidence="1 4 6">Secreted, probably by a type III secretion system. Localized in the inclusion membrane (Probable) (PubMed:9826388). In the inclusion, the C-terminus faces the host cytosol (By similarity).</text>
</comment>
<comment type="domain">
    <text evidence="1">IncA proteins share the same general organization: a short N-terminal domain, a large bilobed hydrophobic domain, and a C-terminal cytoplasmic domain.</text>
</comment>
<comment type="similarity">
    <text evidence="5">Belongs to the IncA family.</text>
</comment>
<sequence length="273" mass="30346">MTTPTLIVTPPSPPAPSYSANRVPQPSLMDKIKKIAAIASLILIGTIGFLALLGHLVGFLIAPQITIVLLALFITSLAGNALYLQKTANLHLYQDLQREVGSLKEINFMLSVLQKEFLHLSKEFATTSKDLSAVSQDFYSCLQGFRDNYKGFESLLDEYKNSTEEMRKLFSQEIIADLKSSVASLREEIRFLTPLAEEVRRLAHNRESLTAAIEELKTIRDSLRDEIGQLSQLSRTLTSQIALQRKESSDLCSQIRETLSSPRKSASPSTKSS</sequence>
<reference key="1">
    <citation type="journal article" date="2001" name="Infect. Immun.">
        <title>Normal IncA expression and fusogenicity of inclusions in Chlamydia trachomatis isolates with the incA I47T mutation.</title>
        <authorList>
            <person name="Pannekoek Y."/>
            <person name="van der Ende A."/>
            <person name="Eijk P.P."/>
            <person name="van Marle J."/>
            <person name="de Witte M.A."/>
            <person name="Ossewaarde J.M."/>
            <person name="van den Brule A.J.C."/>
            <person name="Morre S.A."/>
            <person name="Dankert J."/>
        </authorList>
    </citation>
    <scope>NUCLEOTIDE SEQUENCE [GENOMIC DNA]</scope>
    <scope>SUBCELLULAR LOCATION</scope>
    <source>
        <strain>B/Tw-5/OT</strain>
        <strain>L1/440/LN</strain>
        <strain>L3/404</strain>
    </source>
</reference>
<reference key="2">
    <citation type="journal article" date="1998" name="Infect. Immun.">
        <title>Chlamydia trachomatis IncA is localized to the inclusion membrane and is recognized by antisera from infected humans and primates.</title>
        <authorList>
            <person name="Bannantine J.P."/>
            <person name="Stamm W.E."/>
            <person name="Suchland R.J."/>
            <person name="Rockey D.D."/>
        </authorList>
    </citation>
    <scope>SUBCELLULAR LOCATION</scope>
    <source>
        <strain>A/G-17/OT</strain>
        <strain>B/Tw-5/OT</strain>
        <strain>Ba/Ap-2/OT</strain>
        <strain>C/TW-3/OT</strain>
        <strain>D-/MT 157/Cx</strain>
        <strain>Da/TW-448/Cx</strain>
        <strain>E/UW-5/Cx</strain>
        <strain>F/UW-6/Cx</strain>
        <strain>G/UW-57/Cx</strain>
        <strain>H/UW-4/Cx</strain>
        <strain>I-/MT 518/Cx</strain>
        <strain>I/UW-12/Ur</strain>
        <strain>Ia/UW-202/NP</strain>
        <strain>J/UW-36/Cx</strain>
        <strain>K/UW-31/Cx</strain>
        <strain>L1/440/Bu</strain>
        <strain>L2a/UW-396/Bu</strain>
        <strain>L3/404/Bu</strain>
    </source>
</reference>
<keyword id="KW-0175">Coiled coil</keyword>
<keyword id="KW-1043">Host membrane</keyword>
<keyword id="KW-0472">Membrane</keyword>
<keyword id="KW-0964">Secreted</keyword>
<keyword id="KW-0812">Transmembrane</keyword>
<keyword id="KW-1133">Transmembrane helix</keyword>
<keyword id="KW-0843">Virulence</keyword>
<accession>P0DPS5</accession>
<accession>O69196</accession>
<accession>Q9AMA4</accession>
<accession>Q9AMA5</accession>
<accession>Q9AMA6</accession>
<accession>Q9AMB2</accession>
<proteinExistence type="inferred from homology"/>
<dbReference type="EMBL" id="AF327008">
    <property type="protein sequence ID" value="AAG61105.1"/>
    <property type="molecule type" value="Genomic_DNA"/>
</dbReference>
<dbReference type="EMBL" id="AF327010">
    <property type="protein sequence ID" value="AAG61107.1"/>
    <property type="molecule type" value="Genomic_DNA"/>
</dbReference>
<dbReference type="EMBL" id="AF326993">
    <property type="protein sequence ID" value="AAG61090.1"/>
    <property type="molecule type" value="Genomic_DNA"/>
</dbReference>
<dbReference type="SMR" id="P0DPS5"/>
<dbReference type="GO" id="GO:0005576">
    <property type="term" value="C:extracellular region"/>
    <property type="evidence" value="ECO:0007669"/>
    <property type="project" value="UniProtKB-SubCell"/>
</dbReference>
<dbReference type="GO" id="GO:0033644">
    <property type="term" value="C:host cell membrane"/>
    <property type="evidence" value="ECO:0007669"/>
    <property type="project" value="UniProtKB-KW"/>
</dbReference>
<dbReference type="GO" id="GO:0140221">
    <property type="term" value="C:pathogen-containing vacuole membrane"/>
    <property type="evidence" value="ECO:0000314"/>
    <property type="project" value="UniProtKB"/>
</dbReference>
<organism>
    <name type="scientific">Chlamydia trachomatis</name>
    <dbReference type="NCBI Taxonomy" id="813"/>
    <lineage>
        <taxon>Bacteria</taxon>
        <taxon>Pseudomonadati</taxon>
        <taxon>Chlamydiota</taxon>
        <taxon>Chlamydiia</taxon>
        <taxon>Chlamydiales</taxon>
        <taxon>Chlamydiaceae</taxon>
        <taxon>Chlamydia/Chlamydophila group</taxon>
        <taxon>Chlamydia</taxon>
    </lineage>
</organism>
<protein>
    <recommendedName>
        <fullName>Inclusion membrane protein A</fullName>
    </recommendedName>
</protein>
<evidence type="ECO:0000250" key="1">
    <source>
        <dbReference type="UniProtKB" id="A0A0H3MD02"/>
    </source>
</evidence>
<evidence type="ECO:0000255" key="2"/>
<evidence type="ECO:0000256" key="3">
    <source>
        <dbReference type="SAM" id="MobiDB-lite"/>
    </source>
</evidence>
<evidence type="ECO:0000269" key="4">
    <source>
    </source>
</evidence>
<evidence type="ECO:0000305" key="5"/>
<evidence type="ECO:0000305" key="6">
    <source>
    </source>
</evidence>
<name>INCA_CHLTH</name>
<feature type="chain" id="PRO_0000084197" description="Inclusion membrane protein A">
    <location>
        <begin position="1"/>
        <end position="273"/>
    </location>
</feature>
<feature type="transmembrane region" description="Helical" evidence="2">
    <location>
        <begin position="41"/>
        <end position="61"/>
    </location>
</feature>
<feature type="transmembrane region" description="Helical" evidence="2">
    <location>
        <begin position="64"/>
        <end position="84"/>
    </location>
</feature>
<feature type="region of interest" description="Disordered" evidence="3">
    <location>
        <begin position="1"/>
        <end position="20"/>
    </location>
</feature>
<feature type="region of interest" description="Disordered" evidence="3">
    <location>
        <begin position="254"/>
        <end position="273"/>
    </location>
</feature>
<feature type="coiled-coil region" evidence="2">
    <location>
        <begin position="170"/>
        <end position="233"/>
    </location>
</feature>
<feature type="sequence variant" description="In strain: L1/440-L.">
    <original>R</original>
    <variation>C</variation>
    <location>
        <position position="200"/>
    </location>
</feature>
<feature type="sequence variant" description="In strain: L1/440/LN and B/Tw-5/OT.">
    <original>R</original>
    <variation>K</variation>
    <location>
        <position position="235"/>
    </location>
</feature>
<gene>
    <name type="primary">incA</name>
</gene>